<comment type="function">
    <text evidence="1">Catalyzes the oxidative deamination and cyclization of 2-amino-3,7-dideoxy-D-threo-hept-6-ulosonic acid (ADH) to yield 3-dehydroquinate (DHQ), which is fed into the canonical shikimic pathway of aromatic amino acid biosynthesis.</text>
</comment>
<comment type="catalytic activity">
    <reaction evidence="1">
        <text>2-amino-2,3,7-trideoxy-D-lyxo-hept-6-ulosonate + NAD(+) + H2O = 3-dehydroquinate + NH4(+) + NADH + H(+)</text>
        <dbReference type="Rhea" id="RHEA:25956"/>
        <dbReference type="ChEBI" id="CHEBI:15377"/>
        <dbReference type="ChEBI" id="CHEBI:15378"/>
        <dbReference type="ChEBI" id="CHEBI:28938"/>
        <dbReference type="ChEBI" id="CHEBI:32364"/>
        <dbReference type="ChEBI" id="CHEBI:57540"/>
        <dbReference type="ChEBI" id="CHEBI:57945"/>
        <dbReference type="ChEBI" id="CHEBI:58859"/>
        <dbReference type="EC" id="1.4.1.24"/>
    </reaction>
</comment>
<comment type="similarity">
    <text evidence="1">Belongs to the archaeal-type DHQ synthase family.</text>
</comment>
<dbReference type="EC" id="1.4.1.24" evidence="1"/>
<dbReference type="EMBL" id="CP000099">
    <property type="protein sequence ID" value="AAZ69894.1"/>
    <property type="molecule type" value="Genomic_DNA"/>
</dbReference>
<dbReference type="STRING" id="269797.Mbar_A0921"/>
<dbReference type="PaxDb" id="269797-Mbar_A0921"/>
<dbReference type="KEGG" id="mba:Mbar_A0921"/>
<dbReference type="eggNOG" id="arCOG04353">
    <property type="taxonomic scope" value="Archaea"/>
</dbReference>
<dbReference type="HOGENOM" id="CLU_056379_0_0_2"/>
<dbReference type="OrthoDB" id="10265at2157"/>
<dbReference type="GO" id="GO:0003856">
    <property type="term" value="F:3-dehydroquinate synthase activity"/>
    <property type="evidence" value="ECO:0007669"/>
    <property type="project" value="InterPro"/>
</dbReference>
<dbReference type="GO" id="GO:0102042">
    <property type="term" value="F:dehydroquinate synthase activity"/>
    <property type="evidence" value="ECO:0007669"/>
    <property type="project" value="UniProtKB-EC"/>
</dbReference>
<dbReference type="GO" id="GO:0051287">
    <property type="term" value="F:NAD binding"/>
    <property type="evidence" value="ECO:0007669"/>
    <property type="project" value="UniProtKB-UniRule"/>
</dbReference>
<dbReference type="GO" id="GO:0008652">
    <property type="term" value="P:amino acid biosynthetic process"/>
    <property type="evidence" value="ECO:0007669"/>
    <property type="project" value="UniProtKB-KW"/>
</dbReference>
<dbReference type="GO" id="GO:0009073">
    <property type="term" value="P:aromatic amino acid family biosynthetic process"/>
    <property type="evidence" value="ECO:0007669"/>
    <property type="project" value="UniProtKB-UniRule"/>
</dbReference>
<dbReference type="HAMAP" id="MF_01244">
    <property type="entry name" value="Arch_DHQ_synthase"/>
    <property type="match status" value="1"/>
</dbReference>
<dbReference type="InterPro" id="IPR002812">
    <property type="entry name" value="DHQ_synth"/>
</dbReference>
<dbReference type="NCBIfam" id="NF002626">
    <property type="entry name" value="PRK02290.1-4"/>
    <property type="match status" value="1"/>
</dbReference>
<dbReference type="PANTHER" id="PTHR33563">
    <property type="match status" value="1"/>
</dbReference>
<dbReference type="PANTHER" id="PTHR33563:SF1">
    <property type="entry name" value="3-DEHYDROQUINATE SYNTHASE"/>
    <property type="match status" value="1"/>
</dbReference>
<dbReference type="Pfam" id="PF01959">
    <property type="entry name" value="DHQS"/>
    <property type="match status" value="1"/>
</dbReference>
<dbReference type="PIRSF" id="PIRSF006655">
    <property type="entry name" value="DHQ_synth"/>
    <property type="match status" value="1"/>
</dbReference>
<dbReference type="SUPFAM" id="SSF51395">
    <property type="entry name" value="FMN-linked oxidoreductases"/>
    <property type="match status" value="1"/>
</dbReference>
<gene>
    <name evidence="1" type="primary">aroB'</name>
    <name type="ordered locus">Mbar_A0921</name>
</gene>
<proteinExistence type="inferred from homology"/>
<evidence type="ECO:0000255" key="1">
    <source>
        <dbReference type="HAMAP-Rule" id="MF_01244"/>
    </source>
</evidence>
<organism>
    <name type="scientific">Methanosarcina barkeri (strain Fusaro / DSM 804)</name>
    <dbReference type="NCBI Taxonomy" id="269797"/>
    <lineage>
        <taxon>Archaea</taxon>
        <taxon>Methanobacteriati</taxon>
        <taxon>Methanobacteriota</taxon>
        <taxon>Stenosarchaea group</taxon>
        <taxon>Methanomicrobia</taxon>
        <taxon>Methanosarcinales</taxon>
        <taxon>Methanosarcinaceae</taxon>
        <taxon>Methanosarcina</taxon>
    </lineage>
</organism>
<reference key="1">
    <citation type="journal article" date="2006" name="J. Bacteriol.">
        <title>The Methanosarcina barkeri genome: comparative analysis with Methanosarcina acetivorans and Methanosarcina mazei reveals extensive rearrangement within methanosarcinal genomes.</title>
        <authorList>
            <person name="Maeder D.L."/>
            <person name="Anderson I."/>
            <person name="Brettin T.S."/>
            <person name="Bruce D.C."/>
            <person name="Gilna P."/>
            <person name="Han C.S."/>
            <person name="Lapidus A."/>
            <person name="Metcalf W.W."/>
            <person name="Saunders E."/>
            <person name="Tapia R."/>
            <person name="Sowers K.R."/>
        </authorList>
    </citation>
    <scope>NUCLEOTIDE SEQUENCE [LARGE SCALE GENOMIC DNA]</scope>
    <source>
        <strain>Fusaro / DSM 804</strain>
    </source>
</reference>
<name>DHQS_METBF</name>
<keyword id="KW-0028">Amino-acid biosynthesis</keyword>
<keyword id="KW-0057">Aromatic amino acid biosynthesis</keyword>
<keyword id="KW-0520">NAD</keyword>
<keyword id="KW-0560">Oxidoreductase</keyword>
<sequence>MKKKSVWIKADEGGWEQQKERITTGLESGADCVLVNPGDVGKVRELGNIPVATFGRDNKSGAEIIVVGKRGEGDGTKPLPLETQGSLDINAATLLRDKEVAVGGYVIIKDKRYEQFAAEMGKVCDFLIVTGTDWKVIPLENLIAELQRYDVKIIFGVKNAEEARLAFKTLETGADGVLLNSGNIQEIKDTIQAAREMENERTELESAVITRVEPLGMGDRVCVDTCNLMQKGEGMLIGSQASGMFLVNSESDDSPYVAARPFRVNAGAVHSYIKIGDKTRYLSELRTGDAVTIIDSKGRQREGFVGRVKIESRPLMLIEAKAGNRTLSAILQNAETIKLVGKDGNPISVAKLKKGDEVLVRLEEGARHFGKKIEETIIEK</sequence>
<feature type="chain" id="PRO_1000067065" description="3-dehydroquinate synthase">
    <location>
        <begin position="1"/>
        <end position="380"/>
    </location>
</feature>
<protein>
    <recommendedName>
        <fullName evidence="1">3-dehydroquinate synthase</fullName>
        <shortName evidence="1">DHQ synthase</shortName>
        <ecNumber evidence="1">1.4.1.24</ecNumber>
    </recommendedName>
    <alternativeName>
        <fullName evidence="1">3-dehydroquinate synthase II</fullName>
    </alternativeName>
</protein>
<accession>Q46DZ8</accession>